<proteinExistence type="evidence at transcript level"/>
<gene>
    <name evidence="1" type="primary">petL</name>
</gene>
<accession>P69400</accession>
<accession>P52805</accession>
<comment type="function">
    <text evidence="1">Component of the cytochrome b6-f complex, which mediates electron transfer between photosystem II (PSII) and photosystem I (PSI), cyclic electron flow around PSI, and state transitions. PetL is important for photoautotrophic growth as well as for electron transfer efficiency and stability of the cytochrome b6-f complex.</text>
</comment>
<comment type="subunit">
    <text evidence="1">The 4 large subunits of the cytochrome b6-f complex are cytochrome b6, subunit IV (17 kDa polypeptide, PetD), cytochrome f and the Rieske protein, while the 4 small subunits are PetG, PetL, PetM and PetN. The complex functions as a dimer.</text>
</comment>
<comment type="subcellular location">
    <subcellularLocation>
        <location evidence="1">Plastid</location>
        <location evidence="1">Chloroplast thylakoid membrane</location>
        <topology evidence="1">Single-pass membrane protein</topology>
    </subcellularLocation>
</comment>
<comment type="RNA editing">
    <location>
        <position position="1" evidence="2"/>
    </location>
    <location>
        <position position="27" evidence="2"/>
    </location>
    <location>
        <position position="34" evidence="2"/>
    </location>
    <text>The initiator methionine is created by RNA editing. The stop codon at position 34 is created by RNA editing.</text>
</comment>
<comment type="similarity">
    <text evidence="1">Belongs to the PetL family.</text>
</comment>
<sequence length="33" mass="3718">MPTITIISYFGFLLASIIFTLVLFISLSKIQLI</sequence>
<organism>
    <name type="scientific">Pinus thunbergii</name>
    <name type="common">Japanese black pine</name>
    <name type="synonym">Pinus thunbergiana</name>
    <dbReference type="NCBI Taxonomy" id="3350"/>
    <lineage>
        <taxon>Eukaryota</taxon>
        <taxon>Viridiplantae</taxon>
        <taxon>Streptophyta</taxon>
        <taxon>Embryophyta</taxon>
        <taxon>Tracheophyta</taxon>
        <taxon>Spermatophyta</taxon>
        <taxon>Pinopsida</taxon>
        <taxon>Pinidae</taxon>
        <taxon>Conifers I</taxon>
        <taxon>Pinales</taxon>
        <taxon>Pinaceae</taxon>
        <taxon>Pinus</taxon>
        <taxon>Pinus subgen. Pinus</taxon>
    </lineage>
</organism>
<reference key="1">
    <citation type="journal article" date="1994" name="Proc. Natl. Acad. Sci. U.S.A.">
        <title>Loss of all ndh genes as determined by sequencing the entire chloroplast genome of the black pine Pinus thunbergii.</title>
        <authorList>
            <person name="Wakasugi T."/>
            <person name="Tsudzuki J."/>
            <person name="Ito S."/>
            <person name="Nakashima K."/>
            <person name="Tsudzuki T."/>
            <person name="Sugiura M."/>
        </authorList>
    </citation>
    <scope>NUCLEOTIDE SEQUENCE [LARGE SCALE GENOMIC DNA]</scope>
</reference>
<reference key="2">
    <citation type="journal article" date="1996" name="Proc. Natl. Acad. Sci. U.S.A.">
        <title>Creation of a novel protein-coding region at the RNA level in black pine chloroplasts: the pattern of RNA editing in the gymnosperm chloroplast is different from that in angiosperms.</title>
        <authorList>
            <person name="Wakasugi T."/>
            <person name="Hirose T."/>
            <person name="Horihata M."/>
            <person name="Tsudzuki T."/>
            <person name="Koessel H."/>
            <person name="Sugiura M."/>
        </authorList>
    </citation>
    <scope>NUCLEOTIDE SEQUENCE [MRNA]</scope>
    <scope>RNA EDITING</scope>
</reference>
<evidence type="ECO:0000255" key="1">
    <source>
        <dbReference type="HAMAP-Rule" id="MF_00433"/>
    </source>
</evidence>
<evidence type="ECO:0000269" key="2">
    <source>
    </source>
</evidence>
<dbReference type="EMBL" id="D17510">
    <property type="protein sequence ID" value="BAA04348.1"/>
    <property type="status" value="ALT_SEQ"/>
    <property type="molecule type" value="Genomic_DNA"/>
</dbReference>
<dbReference type="PIR" id="T07470">
    <property type="entry name" value="T07470"/>
</dbReference>
<dbReference type="RefSeq" id="NP_042391.2">
    <property type="nucleotide sequence ID" value="NC_001631.1"/>
</dbReference>
<dbReference type="SMR" id="P69400"/>
<dbReference type="GO" id="GO:0009535">
    <property type="term" value="C:chloroplast thylakoid membrane"/>
    <property type="evidence" value="ECO:0007669"/>
    <property type="project" value="UniProtKB-SubCell"/>
</dbReference>
<dbReference type="GO" id="GO:0009512">
    <property type="term" value="C:cytochrome b6f complex"/>
    <property type="evidence" value="ECO:0007669"/>
    <property type="project" value="InterPro"/>
</dbReference>
<dbReference type="GO" id="GO:0045158">
    <property type="term" value="F:electron transporter, transferring electrons within cytochrome b6/f complex of photosystem II activity"/>
    <property type="evidence" value="ECO:0007669"/>
    <property type="project" value="UniProtKB-UniRule"/>
</dbReference>
<dbReference type="GO" id="GO:0015979">
    <property type="term" value="P:photosynthesis"/>
    <property type="evidence" value="ECO:0007669"/>
    <property type="project" value="UniProtKB-KW"/>
</dbReference>
<dbReference type="HAMAP" id="MF_00433">
    <property type="entry name" value="Cytb6_f_PetL"/>
    <property type="match status" value="1"/>
</dbReference>
<dbReference type="InterPro" id="IPR007802">
    <property type="entry name" value="Cyt_b6/f_cplx_su6"/>
</dbReference>
<dbReference type="PANTHER" id="PTHR37266">
    <property type="entry name" value="CYTOCHROME B6-F COMPLEX SUBUNIT 6"/>
    <property type="match status" value="1"/>
</dbReference>
<dbReference type="PANTHER" id="PTHR37266:SF1">
    <property type="entry name" value="CYTOCHROME B6-F COMPLEX SUBUNIT 6"/>
    <property type="match status" value="1"/>
</dbReference>
<dbReference type="Pfam" id="PF05115">
    <property type="entry name" value="PetL"/>
    <property type="match status" value="1"/>
</dbReference>
<feature type="chain" id="PRO_0000220469" description="Cytochrome b6-f complex subunit 6">
    <location>
        <begin position="1"/>
        <end position="33"/>
    </location>
</feature>
<feature type="transmembrane region" description="Helical" evidence="1">
    <location>
        <begin position="4"/>
        <end position="24"/>
    </location>
</feature>
<protein>
    <recommendedName>
        <fullName evidence="1">Cytochrome b6-f complex subunit 6</fullName>
    </recommendedName>
    <alternativeName>
        <fullName evidence="1">Cytochrome b6-f complex subunit PetL</fullName>
    </alternativeName>
    <alternativeName>
        <fullName evidence="1">Cytochrome b6-f complex subunit VI</fullName>
    </alternativeName>
</protein>
<keyword id="KW-0150">Chloroplast</keyword>
<keyword id="KW-0249">Electron transport</keyword>
<keyword id="KW-0472">Membrane</keyword>
<keyword id="KW-0602">Photosynthesis</keyword>
<keyword id="KW-0934">Plastid</keyword>
<keyword id="KW-0691">RNA editing</keyword>
<keyword id="KW-0793">Thylakoid</keyword>
<keyword id="KW-0812">Transmembrane</keyword>
<keyword id="KW-1133">Transmembrane helix</keyword>
<keyword id="KW-0813">Transport</keyword>
<name>PETL_PINTH</name>
<geneLocation type="chloroplast"/>